<keyword id="KW-0002">3D-structure</keyword>
<keyword id="KW-0027">Amidation</keyword>
<keyword id="KW-0044">Antibiotic</keyword>
<keyword id="KW-0929">Antimicrobial</keyword>
<keyword id="KW-0165">Cleavage on pair of basic residues</keyword>
<keyword id="KW-0903">Direct protein sequencing</keyword>
<keyword id="KW-1015">Disulfide bond</keyword>
<keyword id="KW-0964">Secreted</keyword>
<keyword id="KW-0732">Signal</keyword>
<reference key="1">
    <citation type="journal article" date="1990" name="J. Biol. Chem.">
        <title>Antimicrobial tachyplesin peptide precursor. cDNA cloning and cellular localization in the horseshoe crab (Tachypleus tridentatus).</title>
        <authorList>
            <person name="Shigenaga T."/>
            <person name="Muta T."/>
            <person name="Toh Y."/>
            <person name="Tokunaga F."/>
            <person name="Iwanaga S."/>
        </authorList>
    </citation>
    <scope>NUCLEOTIDE SEQUENCE [MRNA]</scope>
    <scope>AMIDATION AT ARG-40</scope>
</reference>
<reference key="2">
    <citation type="journal article" date="1989" name="J. Biochem.">
        <title>Antimicrobial peptides, isolated from horseshoe crab hemocytes, tachyplesin II, and polyphemusins I and II: chemical structures and biological activity.</title>
        <authorList>
            <person name="Miyata T."/>
            <person name="Tokunaga F."/>
            <person name="Yonega T."/>
            <person name="Yoshikawa K."/>
            <person name="Iwanaga S."/>
            <person name="Niwa M."/>
            <person name="Takao T."/>
            <person name="Shimonishi Y."/>
        </authorList>
    </citation>
    <scope>PROTEIN SEQUENCE OF 24-40</scope>
</reference>
<reference key="3">
    <citation type="journal article" date="1993" name="J. Biochem.">
        <title>Separation of large and small granules from horseshoe crab (Tachypleus tridentatus) hemocytes and characterization of their components.</title>
        <authorList>
            <person name="Shigenaga T."/>
            <person name="Takayenoki Y."/>
            <person name="Kawasaki S."/>
            <person name="Seki N."/>
            <person name="Muta T."/>
            <person name="Toh Y."/>
            <person name="Ito A."/>
            <person name="Iwanaga S."/>
        </authorList>
    </citation>
    <scope>CHARACTERIZATION</scope>
</reference>
<name>TAC2_TACTR</name>
<sequence length="77" mass="9335">MKKLVIALCLMMVLAVMVEEAEARWCFRVCYRGICYRKCRGKRNEVRQYRDRGYDVRAIPDETFFTRQDEDEDDDEE</sequence>
<feature type="signal peptide" evidence="3">
    <location>
        <begin position="1"/>
        <end position="23"/>
    </location>
</feature>
<feature type="peptide" id="PRO_0000033578" description="Tachyplesin-2">
    <location>
        <begin position="24"/>
        <end position="40"/>
    </location>
</feature>
<feature type="propeptide" id="PRO_0000033579">
    <location>
        <begin position="41"/>
        <end position="77"/>
    </location>
</feature>
<feature type="modified residue" description="Arginine amide" evidence="2">
    <location>
        <position position="40"/>
    </location>
</feature>
<feature type="disulfide bond" evidence="1">
    <location>
        <begin position="26"/>
        <end position="39"/>
    </location>
</feature>
<feature type="disulfide bond" evidence="1">
    <location>
        <begin position="30"/>
        <end position="35"/>
    </location>
</feature>
<feature type="strand" evidence="5">
    <location>
        <begin position="25"/>
        <end position="31"/>
    </location>
</feature>
<feature type="strand" evidence="5">
    <location>
        <begin position="34"/>
        <end position="40"/>
    </location>
</feature>
<accession>P14214</accession>
<comment type="function">
    <text>Significantly inhibits the growth of Gram-negative and Gram-positive bacteria.</text>
</comment>
<comment type="subcellular location">
    <subcellularLocation>
        <location>Secreted</location>
    </subcellularLocation>
    <text>S-granules.</text>
</comment>
<comment type="tissue specificity">
    <text>Hemocytes.</text>
</comment>
<comment type="similarity">
    <text evidence="4">Belongs to the tachyplesin/polyphemusin family.</text>
</comment>
<protein>
    <recommendedName>
        <fullName>Tachyplesin-2</fullName>
    </recommendedName>
    <alternativeName>
        <fullName>Tachyplesin II</fullName>
    </alternativeName>
</protein>
<proteinExistence type="evidence at protein level"/>
<evidence type="ECO:0000250" key="1"/>
<evidence type="ECO:0000269" key="2">
    <source>
    </source>
</evidence>
<evidence type="ECO:0000269" key="3">
    <source>
    </source>
</evidence>
<evidence type="ECO:0000305" key="4"/>
<evidence type="ECO:0007829" key="5">
    <source>
        <dbReference type="PDB" id="6PIO"/>
    </source>
</evidence>
<organism>
    <name type="scientific">Tachypleus tridentatus</name>
    <name type="common">Japanese horseshoe crab</name>
    <dbReference type="NCBI Taxonomy" id="6853"/>
    <lineage>
        <taxon>Eukaryota</taxon>
        <taxon>Metazoa</taxon>
        <taxon>Ecdysozoa</taxon>
        <taxon>Arthropoda</taxon>
        <taxon>Chelicerata</taxon>
        <taxon>Merostomata</taxon>
        <taxon>Xiphosura</taxon>
        <taxon>Limulidae</taxon>
        <taxon>Tachypleus</taxon>
    </lineage>
</organism>
<dbReference type="PIR" id="B38345">
    <property type="entry name" value="B38345"/>
</dbReference>
<dbReference type="PDB" id="6PIO">
    <property type="method" value="NMR"/>
    <property type="chains" value="A=24-41"/>
</dbReference>
<dbReference type="PDBsum" id="6PIO"/>
<dbReference type="BMRB" id="P14214"/>
<dbReference type="SMR" id="P14214"/>
<dbReference type="GO" id="GO:0005576">
    <property type="term" value="C:extracellular region"/>
    <property type="evidence" value="ECO:0007669"/>
    <property type="project" value="UniProtKB-SubCell"/>
</dbReference>
<dbReference type="GO" id="GO:0042742">
    <property type="term" value="P:defense response to bacterium"/>
    <property type="evidence" value="ECO:0007669"/>
    <property type="project" value="UniProtKB-KW"/>
</dbReference>